<organism>
    <name type="scientific">Homo sapiens</name>
    <name type="common">Human</name>
    <dbReference type="NCBI Taxonomy" id="9606"/>
    <lineage>
        <taxon>Eukaryota</taxon>
        <taxon>Metazoa</taxon>
        <taxon>Chordata</taxon>
        <taxon>Craniata</taxon>
        <taxon>Vertebrata</taxon>
        <taxon>Euteleostomi</taxon>
        <taxon>Mammalia</taxon>
        <taxon>Eutheria</taxon>
        <taxon>Euarchontoglires</taxon>
        <taxon>Primates</taxon>
        <taxon>Haplorrhini</taxon>
        <taxon>Catarrhini</taxon>
        <taxon>Hominidae</taxon>
        <taxon>Homo</taxon>
    </lineage>
</organism>
<feature type="chain" id="PRO_0000332996" description="Coiled-coil domain-containing protein 159">
    <location>
        <begin position="1"/>
        <end position="297"/>
    </location>
</feature>
<feature type="region of interest" description="Disordered" evidence="3">
    <location>
        <begin position="256"/>
        <end position="297"/>
    </location>
</feature>
<feature type="coiled-coil region" evidence="2">
    <location>
        <begin position="147"/>
        <end position="297"/>
    </location>
</feature>
<feature type="splice variant" id="VSP_059513" description="In isoform 3 and isoform 4.">
    <original>MGEHEQ</original>
    <variation>MNRWY</variation>
    <location>
        <begin position="1"/>
        <end position="6"/>
    </location>
</feature>
<feature type="splice variant" id="VSP_059514" description="In isoform 3 and isoform 5.">
    <original>SKKFLWEELELVREEVTFIYQKLQAQEDEISENLVNI</original>
    <variation>RSGMAGGQLGVHRREGRPRTGEWRQDGGNGRCLGEGD</variation>
    <location>
        <begin position="141"/>
        <end position="177"/>
    </location>
</feature>
<feature type="splice variant" id="VSP_059515" description="In isoform 3 and isoform 5.">
    <location>
        <begin position="178"/>
        <end position="297"/>
    </location>
</feature>
<feature type="sequence variant" id="VAR_043032" description="In dbSNP:rs6887.">
    <original>C</original>
    <variation>S</variation>
    <location>
        <position position="278"/>
    </location>
</feature>
<sequence length="297" mass="33695">MGEHEQVKPLETSSSKVKAKTIVMIPDSQKLLRCELESLKSQLQAQTKAFEFLNHSVTMLEKESCLQQIKIQQLEEVLSPTGRQGEKEEHKWGMEQGRQELYGALTQGLQGLEKTLRDSEEMQRARTTRCLQLLAQEIRDSKKFLWEELELVREEVTFIYQKLQAQEDEISENLVNIQKMQKTQVKCRKILTKMKQQGHETAACPETEEIPQGASGCWKDDLQKELSDIWSAVHVLQNSIDSLTLCSGACPKASSLRGHKGHQCLSPPLPSWDSDSDCDQDLSQPPFSKSGRSFPPA</sequence>
<name>CC159_HUMAN</name>
<proteinExistence type="evidence at protein level"/>
<comment type="function">
    <text evidence="1">Functions during spermatid development; may participate in the centrosome reduction procedure of spermatids and is required for the formation of the connecting piece/sperm head-tail coupling apparatus (HTCA) and the correct and tight attachment of the flagellum to the nuclear envelope.</text>
</comment>
<comment type="subunit">
    <text evidence="1">Interacts with DYNLT2 (By similarity). Interacts with GGNBP1 (By similarity). Interacts with OSBP2 (By similarity).</text>
</comment>
<comment type="subcellular location">
    <text evidence="1">Localizes to the spermatid head-tail coupling apparatus (HTCA) during spermatogenesis.</text>
</comment>
<comment type="alternative products">
    <event type="alternative splicing"/>
    <isoform>
        <id>P0C7I6-2</id>
        <name>2</name>
        <sequence type="displayed"/>
    </isoform>
    <isoform>
        <id>P0C7I6-6</id>
        <name>3</name>
        <sequence type="described" ref="VSP_059513 VSP_059514 VSP_059515"/>
    </isoform>
    <isoform>
        <id>P0C7I6-7</id>
        <name>4</name>
        <sequence type="described" ref="VSP_059513"/>
    </isoform>
    <isoform>
        <id>P0C7I6-8</id>
        <name>5</name>
        <sequence type="described" ref="VSP_059514 VSP_059515"/>
    </isoform>
</comment>
<comment type="sequence caution" evidence="4">
    <conflict type="miscellaneous discrepancy">
        <sequence resource="EMBL-CDS" id="BAG63130"/>
    </conflict>
    <text>Intron retention.</text>
</comment>
<comment type="sequence caution" evidence="4">
    <conflict type="miscellaneous discrepancy">
        <sequence resource="EMBL" id="BC038439"/>
    </conflict>
    <text>Cloning artifact.</text>
</comment>
<keyword id="KW-0025">Alternative splicing</keyword>
<keyword id="KW-0175">Coiled coil</keyword>
<keyword id="KW-0221">Differentiation</keyword>
<keyword id="KW-1267">Proteomics identification</keyword>
<keyword id="KW-1185">Reference proteome</keyword>
<keyword id="KW-0744">Spermatogenesis</keyword>
<reference key="1">
    <citation type="journal article" date="2004" name="Nat. Genet.">
        <title>Complete sequencing and characterization of 21,243 full-length human cDNAs.</title>
        <authorList>
            <person name="Ota T."/>
            <person name="Suzuki Y."/>
            <person name="Nishikawa T."/>
            <person name="Otsuki T."/>
            <person name="Sugiyama T."/>
            <person name="Irie R."/>
            <person name="Wakamatsu A."/>
            <person name="Hayashi K."/>
            <person name="Sato H."/>
            <person name="Nagai K."/>
            <person name="Kimura K."/>
            <person name="Makita H."/>
            <person name="Sekine M."/>
            <person name="Obayashi M."/>
            <person name="Nishi T."/>
            <person name="Shibahara T."/>
            <person name="Tanaka T."/>
            <person name="Ishii S."/>
            <person name="Yamamoto J."/>
            <person name="Saito K."/>
            <person name="Kawai Y."/>
            <person name="Isono Y."/>
            <person name="Nakamura Y."/>
            <person name="Nagahari K."/>
            <person name="Murakami K."/>
            <person name="Yasuda T."/>
            <person name="Iwayanagi T."/>
            <person name="Wagatsuma M."/>
            <person name="Shiratori A."/>
            <person name="Sudo H."/>
            <person name="Hosoiri T."/>
            <person name="Kaku Y."/>
            <person name="Kodaira H."/>
            <person name="Kondo H."/>
            <person name="Sugawara M."/>
            <person name="Takahashi M."/>
            <person name="Kanda K."/>
            <person name="Yokoi T."/>
            <person name="Furuya T."/>
            <person name="Kikkawa E."/>
            <person name="Omura Y."/>
            <person name="Abe K."/>
            <person name="Kamihara K."/>
            <person name="Katsuta N."/>
            <person name="Sato K."/>
            <person name="Tanikawa M."/>
            <person name="Yamazaki M."/>
            <person name="Ninomiya K."/>
            <person name="Ishibashi T."/>
            <person name="Yamashita H."/>
            <person name="Murakawa K."/>
            <person name="Fujimori K."/>
            <person name="Tanai H."/>
            <person name="Kimata M."/>
            <person name="Watanabe M."/>
            <person name="Hiraoka S."/>
            <person name="Chiba Y."/>
            <person name="Ishida S."/>
            <person name="Ono Y."/>
            <person name="Takiguchi S."/>
            <person name="Watanabe S."/>
            <person name="Yosida M."/>
            <person name="Hotuta T."/>
            <person name="Kusano J."/>
            <person name="Kanehori K."/>
            <person name="Takahashi-Fujii A."/>
            <person name="Hara H."/>
            <person name="Tanase T.-O."/>
            <person name="Nomura Y."/>
            <person name="Togiya S."/>
            <person name="Komai F."/>
            <person name="Hara R."/>
            <person name="Takeuchi K."/>
            <person name="Arita M."/>
            <person name="Imose N."/>
            <person name="Musashino K."/>
            <person name="Yuuki H."/>
            <person name="Oshima A."/>
            <person name="Sasaki N."/>
            <person name="Aotsuka S."/>
            <person name="Yoshikawa Y."/>
            <person name="Matsunawa H."/>
            <person name="Ichihara T."/>
            <person name="Shiohata N."/>
            <person name="Sano S."/>
            <person name="Moriya S."/>
            <person name="Momiyama H."/>
            <person name="Satoh N."/>
            <person name="Takami S."/>
            <person name="Terashima Y."/>
            <person name="Suzuki O."/>
            <person name="Nakagawa S."/>
            <person name="Senoh A."/>
            <person name="Mizoguchi H."/>
            <person name="Goto Y."/>
            <person name="Shimizu F."/>
            <person name="Wakebe H."/>
            <person name="Hishigaki H."/>
            <person name="Watanabe T."/>
            <person name="Sugiyama A."/>
            <person name="Takemoto M."/>
            <person name="Kawakami B."/>
            <person name="Yamazaki M."/>
            <person name="Watanabe K."/>
            <person name="Kumagai A."/>
            <person name="Itakura S."/>
            <person name="Fukuzumi Y."/>
            <person name="Fujimori Y."/>
            <person name="Komiyama M."/>
            <person name="Tashiro H."/>
            <person name="Tanigami A."/>
            <person name="Fujiwara T."/>
            <person name="Ono T."/>
            <person name="Yamada K."/>
            <person name="Fujii Y."/>
            <person name="Ozaki K."/>
            <person name="Hirao M."/>
            <person name="Ohmori Y."/>
            <person name="Kawabata A."/>
            <person name="Hikiji T."/>
            <person name="Kobatake N."/>
            <person name="Inagaki H."/>
            <person name="Ikema Y."/>
            <person name="Okamoto S."/>
            <person name="Okitani R."/>
            <person name="Kawakami T."/>
            <person name="Noguchi S."/>
            <person name="Itoh T."/>
            <person name="Shigeta K."/>
            <person name="Senba T."/>
            <person name="Matsumura K."/>
            <person name="Nakajima Y."/>
            <person name="Mizuno T."/>
            <person name="Morinaga M."/>
            <person name="Sasaki M."/>
            <person name="Togashi T."/>
            <person name="Oyama M."/>
            <person name="Hata H."/>
            <person name="Watanabe M."/>
            <person name="Komatsu T."/>
            <person name="Mizushima-Sugano J."/>
            <person name="Satoh T."/>
            <person name="Shirai Y."/>
            <person name="Takahashi Y."/>
            <person name="Nakagawa K."/>
            <person name="Okumura K."/>
            <person name="Nagase T."/>
            <person name="Nomura N."/>
            <person name="Kikuchi H."/>
            <person name="Masuho Y."/>
            <person name="Yamashita R."/>
            <person name="Nakai K."/>
            <person name="Yada T."/>
            <person name="Nakamura Y."/>
            <person name="Ohara O."/>
            <person name="Isogai T."/>
            <person name="Sugano S."/>
        </authorList>
    </citation>
    <scope>NUCLEOTIDE SEQUENCE [LARGE SCALE MRNA] (ISOFORMS 3 AND 5)</scope>
    <scope>NUCLEOTIDE SEQUENCE [LARGE SCALE MRNA] OF 1-189 (ISOFORM 4)</scope>
    <scope>NUCLEOTIDE SEQUENCE [LARGE SCALE MRNA] OF 1-230 (ISOFORM 2)</scope>
    <source>
        <tissue>Cerebellum</tissue>
        <tissue>Esophagus</tissue>
        <tissue>Spleen</tissue>
        <tissue>Thymus</tissue>
    </source>
</reference>
<reference key="2">
    <citation type="journal article" date="2004" name="Nature">
        <title>The DNA sequence and biology of human chromosome 19.</title>
        <authorList>
            <person name="Grimwood J."/>
            <person name="Gordon L.A."/>
            <person name="Olsen A.S."/>
            <person name="Terry A."/>
            <person name="Schmutz J."/>
            <person name="Lamerdin J.E."/>
            <person name="Hellsten U."/>
            <person name="Goodstein D."/>
            <person name="Couronne O."/>
            <person name="Tran-Gyamfi M."/>
            <person name="Aerts A."/>
            <person name="Altherr M."/>
            <person name="Ashworth L."/>
            <person name="Bajorek E."/>
            <person name="Black S."/>
            <person name="Branscomb E."/>
            <person name="Caenepeel S."/>
            <person name="Carrano A.V."/>
            <person name="Caoile C."/>
            <person name="Chan Y.M."/>
            <person name="Christensen M."/>
            <person name="Cleland C.A."/>
            <person name="Copeland A."/>
            <person name="Dalin E."/>
            <person name="Dehal P."/>
            <person name="Denys M."/>
            <person name="Detter J.C."/>
            <person name="Escobar J."/>
            <person name="Flowers D."/>
            <person name="Fotopulos D."/>
            <person name="Garcia C."/>
            <person name="Georgescu A.M."/>
            <person name="Glavina T."/>
            <person name="Gomez M."/>
            <person name="Gonzales E."/>
            <person name="Groza M."/>
            <person name="Hammon N."/>
            <person name="Hawkins T."/>
            <person name="Haydu L."/>
            <person name="Ho I."/>
            <person name="Huang W."/>
            <person name="Israni S."/>
            <person name="Jett J."/>
            <person name="Kadner K."/>
            <person name="Kimball H."/>
            <person name="Kobayashi A."/>
            <person name="Larionov V."/>
            <person name="Leem S.-H."/>
            <person name="Lopez F."/>
            <person name="Lou Y."/>
            <person name="Lowry S."/>
            <person name="Malfatti S."/>
            <person name="Martinez D."/>
            <person name="McCready P.M."/>
            <person name="Medina C."/>
            <person name="Morgan J."/>
            <person name="Nelson K."/>
            <person name="Nolan M."/>
            <person name="Ovcharenko I."/>
            <person name="Pitluck S."/>
            <person name="Pollard M."/>
            <person name="Popkie A.P."/>
            <person name="Predki P."/>
            <person name="Quan G."/>
            <person name="Ramirez L."/>
            <person name="Rash S."/>
            <person name="Retterer J."/>
            <person name="Rodriguez A."/>
            <person name="Rogers S."/>
            <person name="Salamov A."/>
            <person name="Salazar A."/>
            <person name="She X."/>
            <person name="Smith D."/>
            <person name="Slezak T."/>
            <person name="Solovyev V."/>
            <person name="Thayer N."/>
            <person name="Tice H."/>
            <person name="Tsai M."/>
            <person name="Ustaszewska A."/>
            <person name="Vo N."/>
            <person name="Wagner M."/>
            <person name="Wheeler J."/>
            <person name="Wu K."/>
            <person name="Xie G."/>
            <person name="Yang J."/>
            <person name="Dubchak I."/>
            <person name="Furey T.S."/>
            <person name="DeJong P."/>
            <person name="Dickson M."/>
            <person name="Gordon D."/>
            <person name="Eichler E.E."/>
            <person name="Pennacchio L.A."/>
            <person name="Richardson P."/>
            <person name="Stubbs L."/>
            <person name="Rokhsar D.S."/>
            <person name="Myers R.M."/>
            <person name="Rubin E.M."/>
            <person name="Lucas S.M."/>
        </authorList>
    </citation>
    <scope>NUCLEOTIDE SEQUENCE [LARGE SCALE GENOMIC DNA]</scope>
</reference>
<reference key="3">
    <citation type="journal article" date="2004" name="Genome Res.">
        <title>The status, quality, and expansion of the NIH full-length cDNA project: the Mammalian Gene Collection (MGC).</title>
        <authorList>
            <consortium name="The MGC Project Team"/>
        </authorList>
    </citation>
    <scope>NUCLEOTIDE SEQUENCE [LARGE SCALE MRNA] OF 8-292 (ISOFORMS 2/4)</scope>
    <source>
        <tissue>Brain</tissue>
    </source>
</reference>
<protein>
    <recommendedName>
        <fullName>Coiled-coil domain-containing protein 159</fullName>
    </recommendedName>
</protein>
<dbReference type="EMBL" id="AK293611">
    <property type="protein sequence ID" value="BAG57074.1"/>
    <property type="molecule type" value="mRNA"/>
</dbReference>
<dbReference type="EMBL" id="AK301653">
    <property type="protein sequence ID" value="BAG63130.1"/>
    <property type="status" value="ALT_SEQ"/>
    <property type="molecule type" value="mRNA"/>
</dbReference>
<dbReference type="EMBL" id="AK303641">
    <property type="protein sequence ID" value="BAG64645.1"/>
    <property type="molecule type" value="mRNA"/>
</dbReference>
<dbReference type="EMBL" id="AK316339">
    <property type="protein sequence ID" value="BAH14710.1"/>
    <property type="molecule type" value="mRNA"/>
</dbReference>
<dbReference type="EMBL" id="AC024575">
    <property type="status" value="NOT_ANNOTATED_CDS"/>
    <property type="molecule type" value="Genomic_DNA"/>
</dbReference>
<dbReference type="EMBL" id="BC038439">
    <property type="status" value="NOT_ANNOTATED_CDS"/>
    <property type="molecule type" value="mRNA"/>
</dbReference>
<dbReference type="CCDS" id="CCDS45976.1">
    <molecule id="P0C7I6-2"/>
</dbReference>
<dbReference type="RefSeq" id="NP_001073972.2">
    <molecule id="P0C7I6-2"/>
    <property type="nucleotide sequence ID" value="NM_001080503.3"/>
</dbReference>
<dbReference type="RefSeq" id="XP_016881749.1">
    <molecule id="P0C7I6-7"/>
    <property type="nucleotide sequence ID" value="XM_017026260.3"/>
</dbReference>
<dbReference type="SMR" id="P0C7I6"/>
<dbReference type="BioGRID" id="125955">
    <property type="interactions" value="1"/>
</dbReference>
<dbReference type="FunCoup" id="P0C7I6">
    <property type="interactions" value="48"/>
</dbReference>
<dbReference type="IntAct" id="P0C7I6">
    <property type="interactions" value="1"/>
</dbReference>
<dbReference type="MINT" id="P0C7I6"/>
<dbReference type="STRING" id="9606.ENSP00000468232"/>
<dbReference type="iPTMnet" id="P0C7I6"/>
<dbReference type="PhosphoSitePlus" id="P0C7I6"/>
<dbReference type="BioMuta" id="CCDC159"/>
<dbReference type="DMDM" id="189041677"/>
<dbReference type="MassIVE" id="P0C7I6"/>
<dbReference type="PaxDb" id="9606-ENSP00000468232"/>
<dbReference type="PeptideAtlas" id="P0C7I6"/>
<dbReference type="ProteomicsDB" id="52338">
    <molecule id="P0C7I6-2"/>
</dbReference>
<dbReference type="Antibodypedia" id="52093">
    <property type="antibodies" value="16 antibodies from 8 providers"/>
</dbReference>
<dbReference type="DNASU" id="126075"/>
<dbReference type="Ensembl" id="ENST00000458408.6">
    <molecule id="P0C7I6-2"/>
    <property type="protein sequence ID" value="ENSP00000402239.1"/>
    <property type="gene ID" value="ENSG00000183401.12"/>
</dbReference>
<dbReference type="Ensembl" id="ENST00000588790.5">
    <molecule id="P0C7I6-2"/>
    <property type="protein sequence ID" value="ENSP00000468232.1"/>
    <property type="gene ID" value="ENSG00000183401.12"/>
</dbReference>
<dbReference type="GeneID" id="126075"/>
<dbReference type="KEGG" id="hsa:126075"/>
<dbReference type="MANE-Select" id="ENST00000458408.6">
    <property type="protein sequence ID" value="ENSP00000402239.1"/>
    <property type="RefSeq nucleotide sequence ID" value="NM_001080503.3"/>
    <property type="RefSeq protein sequence ID" value="NP_001073972.2"/>
</dbReference>
<dbReference type="UCSC" id="uc010xlt.3">
    <molecule id="P0C7I6-2"/>
    <property type="organism name" value="human"/>
</dbReference>
<dbReference type="AGR" id="HGNC:26996"/>
<dbReference type="CTD" id="126075"/>
<dbReference type="GeneCards" id="CCDC159"/>
<dbReference type="HGNC" id="HGNC:26996">
    <property type="gene designation" value="CCDC159"/>
</dbReference>
<dbReference type="HPA" id="ENSG00000183401">
    <property type="expression patterns" value="Low tissue specificity"/>
</dbReference>
<dbReference type="neXtProt" id="NX_P0C7I6"/>
<dbReference type="OpenTargets" id="ENSG00000183401"/>
<dbReference type="VEuPathDB" id="HostDB:ENSG00000183401"/>
<dbReference type="eggNOG" id="ENOG502S2FS">
    <property type="taxonomic scope" value="Eukaryota"/>
</dbReference>
<dbReference type="GeneTree" id="ENSGT00390000008201"/>
<dbReference type="HOGENOM" id="CLU_081600_0_0_1"/>
<dbReference type="InParanoid" id="P0C7I6"/>
<dbReference type="OMA" id="VTCIYQK"/>
<dbReference type="OrthoDB" id="8935875at2759"/>
<dbReference type="PAN-GO" id="P0C7I6">
    <property type="GO annotations" value="0 GO annotations based on evolutionary models"/>
</dbReference>
<dbReference type="PhylomeDB" id="P0C7I6"/>
<dbReference type="PathwayCommons" id="P0C7I6"/>
<dbReference type="SignaLink" id="P0C7I6"/>
<dbReference type="BioGRID-ORCS" id="126075">
    <property type="hits" value="50 hits in 1156 CRISPR screens"/>
</dbReference>
<dbReference type="GenomeRNAi" id="126075"/>
<dbReference type="Pharos" id="P0C7I6">
    <property type="development level" value="Tdark"/>
</dbReference>
<dbReference type="PRO" id="PR:P0C7I6"/>
<dbReference type="Proteomes" id="UP000005640">
    <property type="component" value="Chromosome 19"/>
</dbReference>
<dbReference type="RNAct" id="P0C7I6">
    <property type="molecule type" value="protein"/>
</dbReference>
<dbReference type="Bgee" id="ENSG00000183401">
    <property type="expression patterns" value="Expressed in granulocyte and 155 other cell types or tissues"/>
</dbReference>
<dbReference type="ExpressionAtlas" id="P0C7I6">
    <property type="expression patterns" value="baseline and differential"/>
</dbReference>
<dbReference type="GO" id="GO:0120212">
    <property type="term" value="C:sperm head-tail coupling apparatus"/>
    <property type="evidence" value="ECO:0000250"/>
    <property type="project" value="UniProtKB"/>
</dbReference>
<dbReference type="GO" id="GO:0010467">
    <property type="term" value="P:gene expression"/>
    <property type="evidence" value="ECO:0007669"/>
    <property type="project" value="Ensembl"/>
</dbReference>
<dbReference type="GO" id="GO:0007338">
    <property type="term" value="P:single fertilization"/>
    <property type="evidence" value="ECO:0007669"/>
    <property type="project" value="Ensembl"/>
</dbReference>
<dbReference type="GO" id="GO:0120316">
    <property type="term" value="P:sperm flagellum assembly"/>
    <property type="evidence" value="ECO:0007669"/>
    <property type="project" value="Ensembl"/>
</dbReference>
<dbReference type="GO" id="GO:0007286">
    <property type="term" value="P:spermatid development"/>
    <property type="evidence" value="ECO:0000250"/>
    <property type="project" value="UniProtKB"/>
</dbReference>
<dbReference type="InterPro" id="IPR039284">
    <property type="entry name" value="CCDC159/163"/>
</dbReference>
<dbReference type="PANTHER" id="PTHR34533:SF1">
    <property type="entry name" value="COILED-COIL DOMAIN-CONTAINING PROTEIN 159"/>
    <property type="match status" value="1"/>
</dbReference>
<dbReference type="PANTHER" id="PTHR34533">
    <property type="entry name" value="TRANSMEMBRANE PROTEIN CCDC163"/>
    <property type="match status" value="1"/>
</dbReference>
<accession>P0C7I6</accession>
<accession>B4DEG3</accession>
<accession>B4DWR8</accession>
<accession>B4E133</accession>
<accession>B7ZAM4</accession>
<gene>
    <name type="primary">CCDC159</name>
</gene>
<evidence type="ECO:0000250" key="1">
    <source>
        <dbReference type="UniProtKB" id="Q8C963"/>
    </source>
</evidence>
<evidence type="ECO:0000255" key="2"/>
<evidence type="ECO:0000256" key="3">
    <source>
        <dbReference type="SAM" id="MobiDB-lite"/>
    </source>
</evidence>
<evidence type="ECO:0000305" key="4"/>